<name>EFP_LIMRD</name>
<dbReference type="EMBL" id="CP000705">
    <property type="protein sequence ID" value="ABQ83823.1"/>
    <property type="molecule type" value="Genomic_DNA"/>
</dbReference>
<dbReference type="RefSeq" id="WP_003664757.1">
    <property type="nucleotide sequence ID" value="NZ_AZDD01000044.1"/>
</dbReference>
<dbReference type="SMR" id="A5VLU9"/>
<dbReference type="STRING" id="557436.Lreu_1581"/>
<dbReference type="KEGG" id="lre:Lreu_1581"/>
<dbReference type="PATRIC" id="fig|557436.17.peg.1435"/>
<dbReference type="eggNOG" id="COG0231">
    <property type="taxonomic scope" value="Bacteria"/>
</dbReference>
<dbReference type="HOGENOM" id="CLU_074944_3_0_9"/>
<dbReference type="UniPathway" id="UPA00345"/>
<dbReference type="Proteomes" id="UP000001991">
    <property type="component" value="Chromosome"/>
</dbReference>
<dbReference type="GO" id="GO:0005737">
    <property type="term" value="C:cytoplasm"/>
    <property type="evidence" value="ECO:0007669"/>
    <property type="project" value="UniProtKB-SubCell"/>
</dbReference>
<dbReference type="GO" id="GO:0003746">
    <property type="term" value="F:translation elongation factor activity"/>
    <property type="evidence" value="ECO:0007669"/>
    <property type="project" value="UniProtKB-UniRule"/>
</dbReference>
<dbReference type="GO" id="GO:0043043">
    <property type="term" value="P:peptide biosynthetic process"/>
    <property type="evidence" value="ECO:0007669"/>
    <property type="project" value="InterPro"/>
</dbReference>
<dbReference type="CDD" id="cd04470">
    <property type="entry name" value="S1_EF-P_repeat_1"/>
    <property type="match status" value="1"/>
</dbReference>
<dbReference type="CDD" id="cd05794">
    <property type="entry name" value="S1_EF-P_repeat_2"/>
    <property type="match status" value="1"/>
</dbReference>
<dbReference type="FunFam" id="2.30.30.30:FF:000003">
    <property type="entry name" value="Elongation factor P"/>
    <property type="match status" value="1"/>
</dbReference>
<dbReference type="FunFam" id="2.40.50.140:FF:000004">
    <property type="entry name" value="Elongation factor P"/>
    <property type="match status" value="1"/>
</dbReference>
<dbReference type="FunFam" id="2.40.50.140:FF:000009">
    <property type="entry name" value="Elongation factor P"/>
    <property type="match status" value="1"/>
</dbReference>
<dbReference type="Gene3D" id="2.30.30.30">
    <property type="match status" value="1"/>
</dbReference>
<dbReference type="Gene3D" id="2.40.50.140">
    <property type="entry name" value="Nucleic acid-binding proteins"/>
    <property type="match status" value="2"/>
</dbReference>
<dbReference type="HAMAP" id="MF_00141">
    <property type="entry name" value="EF_P"/>
    <property type="match status" value="1"/>
</dbReference>
<dbReference type="InterPro" id="IPR015365">
    <property type="entry name" value="Elong-fact-P_C"/>
</dbReference>
<dbReference type="InterPro" id="IPR012340">
    <property type="entry name" value="NA-bd_OB-fold"/>
</dbReference>
<dbReference type="InterPro" id="IPR014722">
    <property type="entry name" value="Rib_uL2_dom2"/>
</dbReference>
<dbReference type="InterPro" id="IPR020599">
    <property type="entry name" value="Transl_elong_fac_P/YeiP"/>
</dbReference>
<dbReference type="InterPro" id="IPR013185">
    <property type="entry name" value="Transl_elong_KOW-like"/>
</dbReference>
<dbReference type="InterPro" id="IPR001059">
    <property type="entry name" value="Transl_elong_P/YeiP_cen"/>
</dbReference>
<dbReference type="InterPro" id="IPR013852">
    <property type="entry name" value="Transl_elong_P/YeiP_CS"/>
</dbReference>
<dbReference type="InterPro" id="IPR011768">
    <property type="entry name" value="Transl_elongation_fac_P"/>
</dbReference>
<dbReference type="InterPro" id="IPR008991">
    <property type="entry name" value="Translation_prot_SH3-like_sf"/>
</dbReference>
<dbReference type="NCBIfam" id="TIGR00038">
    <property type="entry name" value="efp"/>
    <property type="match status" value="1"/>
</dbReference>
<dbReference type="NCBIfam" id="NF001810">
    <property type="entry name" value="PRK00529.1"/>
    <property type="match status" value="1"/>
</dbReference>
<dbReference type="PANTHER" id="PTHR30053">
    <property type="entry name" value="ELONGATION FACTOR P"/>
    <property type="match status" value="1"/>
</dbReference>
<dbReference type="PANTHER" id="PTHR30053:SF12">
    <property type="entry name" value="ELONGATION FACTOR P (EF-P) FAMILY PROTEIN"/>
    <property type="match status" value="1"/>
</dbReference>
<dbReference type="Pfam" id="PF01132">
    <property type="entry name" value="EFP"/>
    <property type="match status" value="1"/>
</dbReference>
<dbReference type="Pfam" id="PF08207">
    <property type="entry name" value="EFP_N"/>
    <property type="match status" value="1"/>
</dbReference>
<dbReference type="Pfam" id="PF09285">
    <property type="entry name" value="Elong-fact-P_C"/>
    <property type="match status" value="1"/>
</dbReference>
<dbReference type="PIRSF" id="PIRSF005901">
    <property type="entry name" value="EF-P"/>
    <property type="match status" value="1"/>
</dbReference>
<dbReference type="SMART" id="SM01185">
    <property type="entry name" value="EFP"/>
    <property type="match status" value="1"/>
</dbReference>
<dbReference type="SMART" id="SM00841">
    <property type="entry name" value="Elong-fact-P_C"/>
    <property type="match status" value="1"/>
</dbReference>
<dbReference type="SUPFAM" id="SSF50249">
    <property type="entry name" value="Nucleic acid-binding proteins"/>
    <property type="match status" value="2"/>
</dbReference>
<dbReference type="SUPFAM" id="SSF50104">
    <property type="entry name" value="Translation proteins SH3-like domain"/>
    <property type="match status" value="1"/>
</dbReference>
<dbReference type="PROSITE" id="PS01275">
    <property type="entry name" value="EFP"/>
    <property type="match status" value="1"/>
</dbReference>
<protein>
    <recommendedName>
        <fullName evidence="1">Elongation factor P</fullName>
        <shortName evidence="1">EF-P</shortName>
    </recommendedName>
</protein>
<proteinExistence type="inferred from homology"/>
<accession>A5VLU9</accession>
<gene>
    <name evidence="1" type="primary">efp</name>
    <name type="ordered locus">Lreu_1581</name>
</gene>
<organism>
    <name type="scientific">Limosilactobacillus reuteri (strain DSM 20016)</name>
    <name type="common">Lactobacillus reuteri</name>
    <dbReference type="NCBI Taxonomy" id="557436"/>
    <lineage>
        <taxon>Bacteria</taxon>
        <taxon>Bacillati</taxon>
        <taxon>Bacillota</taxon>
        <taxon>Bacilli</taxon>
        <taxon>Lactobacillales</taxon>
        <taxon>Lactobacillaceae</taxon>
        <taxon>Limosilactobacillus</taxon>
    </lineage>
</organism>
<reference key="1">
    <citation type="journal article" date="2011" name="PLoS Genet.">
        <title>The evolution of host specialization in the vertebrate gut symbiont Lactobacillus reuteri.</title>
        <authorList>
            <person name="Frese S.A."/>
            <person name="Benson A.K."/>
            <person name="Tannock G.W."/>
            <person name="Loach D.M."/>
            <person name="Kim J."/>
            <person name="Zhang M."/>
            <person name="Oh P.L."/>
            <person name="Heng N.C."/>
            <person name="Patil P.B."/>
            <person name="Juge N."/>
            <person name="Mackenzie D.A."/>
            <person name="Pearson B.M."/>
            <person name="Lapidus A."/>
            <person name="Dalin E."/>
            <person name="Tice H."/>
            <person name="Goltsman E."/>
            <person name="Land M."/>
            <person name="Hauser L."/>
            <person name="Ivanova N."/>
            <person name="Kyrpides N.C."/>
            <person name="Walter J."/>
        </authorList>
    </citation>
    <scope>NUCLEOTIDE SEQUENCE [LARGE SCALE GENOMIC DNA]</scope>
    <source>
        <strain>DSM 20016</strain>
    </source>
</reference>
<feature type="chain" id="PRO_1000057924" description="Elongation factor P">
    <location>
        <begin position="1"/>
        <end position="185"/>
    </location>
</feature>
<sequence>MIQTIDLKKGMVFERDGKLLKVLQINHHKPGKGNTLMQMDIQDLRSGSIVHTTMRPSEKVEQVNVDKRSAQYLYDEGDSAVFMDLESYEQYSLNHDLLGDDKNYLVENMKVILNFVNGDIIGVELPTTVELTVAETEPMIKGATIDGGGKPATMETGLVVNVPAFIKNGDKLIINTTDGSYKSRA</sequence>
<comment type="function">
    <text evidence="1">Involved in peptide bond synthesis. Stimulates efficient translation and peptide-bond synthesis on native or reconstituted 70S ribosomes in vitro. Probably functions indirectly by altering the affinity of the ribosome for aminoacyl-tRNA, thus increasing their reactivity as acceptors for peptidyl transferase.</text>
</comment>
<comment type="pathway">
    <text evidence="1">Protein biosynthesis; polypeptide chain elongation.</text>
</comment>
<comment type="subcellular location">
    <subcellularLocation>
        <location evidence="1">Cytoplasm</location>
    </subcellularLocation>
</comment>
<comment type="similarity">
    <text evidence="1">Belongs to the elongation factor P family.</text>
</comment>
<keyword id="KW-0963">Cytoplasm</keyword>
<keyword id="KW-0251">Elongation factor</keyword>
<keyword id="KW-0648">Protein biosynthesis</keyword>
<keyword id="KW-1185">Reference proteome</keyword>
<evidence type="ECO:0000255" key="1">
    <source>
        <dbReference type="HAMAP-Rule" id="MF_00141"/>
    </source>
</evidence>